<proteinExistence type="inferred from homology"/>
<protein>
    <recommendedName>
        <fullName evidence="1">Malate dehydrogenase</fullName>
        <ecNumber evidence="1">1.1.1.37</ecNumber>
    </recommendedName>
</protein>
<reference key="1">
    <citation type="journal article" date="2002" name="DNA Res.">
        <title>Complete genomic sequence of nitrogen-fixing symbiotic bacterium Bradyrhizobium japonicum USDA110.</title>
        <authorList>
            <person name="Kaneko T."/>
            <person name="Nakamura Y."/>
            <person name="Sato S."/>
            <person name="Minamisawa K."/>
            <person name="Uchiumi T."/>
            <person name="Sasamoto S."/>
            <person name="Watanabe A."/>
            <person name="Idesawa K."/>
            <person name="Iriguchi M."/>
            <person name="Kawashima K."/>
            <person name="Kohara M."/>
            <person name="Matsumoto M."/>
            <person name="Shimpo S."/>
            <person name="Tsuruoka H."/>
            <person name="Wada T."/>
            <person name="Yamada M."/>
            <person name="Tabata S."/>
        </authorList>
    </citation>
    <scope>NUCLEOTIDE SEQUENCE [LARGE SCALE GENOMIC DNA]</scope>
    <source>
        <strain>JCM 10833 / BCRC 13528 / IAM 13628 / NBRC 14792 / USDA 110</strain>
    </source>
</reference>
<name>MDH_BRADU</name>
<sequence length="322" mass="34125">MARDKIALIGSGQIGGTLAHLIGLKELGDVVMFDIAEGVPQGKALDIAQSSPVDGFDAHYTGANSYEALDNAKVCIVTAGVPRKPGMSRDDLLSINLKVMEQVGAGIKKYAPDAFVICITNPLDAMVWALQKASGLPHKKVVGMAGVLDSARFRYFLADEFNVSVEDVTAFVLGGHGDTMVPLVKYSTVAGIPLPDLVKMGWTSQARLDEIVDRTRNGGAEIVNLLKTGSAFYAPAASAIAMAESYLRDKKRVLPSAAYLNGEYGVKDMYVGVPVVIGSKGVERVVEIELAGKDREAFDKSVGAVQGLVDACKKIAPDLLGR</sequence>
<gene>
    <name evidence="1" type="primary">mdh</name>
    <name type="ordered locus">bll0456</name>
</gene>
<accession>Q89X59</accession>
<evidence type="ECO:0000255" key="1">
    <source>
        <dbReference type="HAMAP-Rule" id="MF_00487"/>
    </source>
</evidence>
<keyword id="KW-0520">NAD</keyword>
<keyword id="KW-0560">Oxidoreductase</keyword>
<keyword id="KW-1185">Reference proteome</keyword>
<keyword id="KW-0816">Tricarboxylic acid cycle</keyword>
<feature type="chain" id="PRO_0000113439" description="Malate dehydrogenase">
    <location>
        <begin position="1"/>
        <end position="322"/>
    </location>
</feature>
<feature type="active site" description="Proton acceptor" evidence="1">
    <location>
        <position position="176"/>
    </location>
</feature>
<feature type="binding site" evidence="1">
    <location>
        <begin position="10"/>
        <end position="15"/>
    </location>
    <ligand>
        <name>NAD(+)</name>
        <dbReference type="ChEBI" id="CHEBI:57540"/>
    </ligand>
</feature>
<feature type="binding site" evidence="1">
    <location>
        <position position="34"/>
    </location>
    <ligand>
        <name>NAD(+)</name>
        <dbReference type="ChEBI" id="CHEBI:57540"/>
    </ligand>
</feature>
<feature type="binding site" evidence="1">
    <location>
        <position position="83"/>
    </location>
    <ligand>
        <name>substrate</name>
    </ligand>
</feature>
<feature type="binding site" evidence="1">
    <location>
        <position position="89"/>
    </location>
    <ligand>
        <name>substrate</name>
    </ligand>
</feature>
<feature type="binding site" evidence="1">
    <location>
        <position position="96"/>
    </location>
    <ligand>
        <name>NAD(+)</name>
        <dbReference type="ChEBI" id="CHEBI:57540"/>
    </ligand>
</feature>
<feature type="binding site" evidence="1">
    <location>
        <begin position="119"/>
        <end position="121"/>
    </location>
    <ligand>
        <name>NAD(+)</name>
        <dbReference type="ChEBI" id="CHEBI:57540"/>
    </ligand>
</feature>
<feature type="binding site" evidence="1">
    <location>
        <position position="121"/>
    </location>
    <ligand>
        <name>substrate</name>
    </ligand>
</feature>
<feature type="binding site" evidence="1">
    <location>
        <position position="152"/>
    </location>
    <ligand>
        <name>substrate</name>
    </ligand>
</feature>
<dbReference type="EC" id="1.1.1.37" evidence="1"/>
<dbReference type="EMBL" id="BA000040">
    <property type="protein sequence ID" value="BAC45721.1"/>
    <property type="molecule type" value="Genomic_DNA"/>
</dbReference>
<dbReference type="RefSeq" id="NP_767096.1">
    <property type="nucleotide sequence ID" value="NC_004463.1"/>
</dbReference>
<dbReference type="RefSeq" id="WP_008145224.1">
    <property type="nucleotide sequence ID" value="NZ_CP011360.1"/>
</dbReference>
<dbReference type="SMR" id="Q89X59"/>
<dbReference type="FunCoup" id="Q89X59">
    <property type="interactions" value="651"/>
</dbReference>
<dbReference type="STRING" id="224911.AAV28_41530"/>
<dbReference type="EnsemblBacteria" id="BAC45721">
    <property type="protein sequence ID" value="BAC45721"/>
    <property type="gene ID" value="BAC45721"/>
</dbReference>
<dbReference type="GeneID" id="92963382"/>
<dbReference type="KEGG" id="bja:bll0456"/>
<dbReference type="PATRIC" id="fig|224911.44.peg.8987"/>
<dbReference type="eggNOG" id="COG0039">
    <property type="taxonomic scope" value="Bacteria"/>
</dbReference>
<dbReference type="HOGENOM" id="CLU_045401_2_1_5"/>
<dbReference type="InParanoid" id="Q89X59"/>
<dbReference type="OrthoDB" id="9802969at2"/>
<dbReference type="PhylomeDB" id="Q89X59"/>
<dbReference type="PRO" id="PR:Q89X59"/>
<dbReference type="Proteomes" id="UP000002526">
    <property type="component" value="Chromosome"/>
</dbReference>
<dbReference type="GO" id="GO:0005737">
    <property type="term" value="C:cytoplasm"/>
    <property type="evidence" value="ECO:0000318"/>
    <property type="project" value="GO_Central"/>
</dbReference>
<dbReference type="GO" id="GO:0030060">
    <property type="term" value="F:L-malate dehydrogenase (NAD+) activity"/>
    <property type="evidence" value="ECO:0000318"/>
    <property type="project" value="GO_Central"/>
</dbReference>
<dbReference type="GO" id="GO:0019752">
    <property type="term" value="P:carboxylic acid metabolic process"/>
    <property type="evidence" value="ECO:0007669"/>
    <property type="project" value="InterPro"/>
</dbReference>
<dbReference type="GO" id="GO:0006099">
    <property type="term" value="P:tricarboxylic acid cycle"/>
    <property type="evidence" value="ECO:0007669"/>
    <property type="project" value="UniProtKB-UniRule"/>
</dbReference>
<dbReference type="CDD" id="cd01339">
    <property type="entry name" value="LDH-like_MDH"/>
    <property type="match status" value="1"/>
</dbReference>
<dbReference type="FunFam" id="3.40.50.720:FF:000018">
    <property type="entry name" value="Malate dehydrogenase"/>
    <property type="match status" value="1"/>
</dbReference>
<dbReference type="FunFam" id="3.90.110.10:FF:000004">
    <property type="entry name" value="Malate dehydrogenase"/>
    <property type="match status" value="1"/>
</dbReference>
<dbReference type="Gene3D" id="3.90.110.10">
    <property type="entry name" value="Lactate dehydrogenase/glycoside hydrolase, family 4, C-terminal"/>
    <property type="match status" value="1"/>
</dbReference>
<dbReference type="Gene3D" id="3.40.50.720">
    <property type="entry name" value="NAD(P)-binding Rossmann-like Domain"/>
    <property type="match status" value="1"/>
</dbReference>
<dbReference type="HAMAP" id="MF_00487">
    <property type="entry name" value="Malate_dehydrog_3"/>
    <property type="match status" value="1"/>
</dbReference>
<dbReference type="InterPro" id="IPR001557">
    <property type="entry name" value="L-lactate/malate_DH"/>
</dbReference>
<dbReference type="InterPro" id="IPR022383">
    <property type="entry name" value="Lactate/malate_DH_C"/>
</dbReference>
<dbReference type="InterPro" id="IPR001236">
    <property type="entry name" value="Lactate/malate_DH_N"/>
</dbReference>
<dbReference type="InterPro" id="IPR015955">
    <property type="entry name" value="Lactate_DH/Glyco_Ohase_4_C"/>
</dbReference>
<dbReference type="InterPro" id="IPR011275">
    <property type="entry name" value="Malate_DH_type3"/>
</dbReference>
<dbReference type="InterPro" id="IPR036291">
    <property type="entry name" value="NAD(P)-bd_dom_sf"/>
</dbReference>
<dbReference type="NCBIfam" id="TIGR01763">
    <property type="entry name" value="MalateDH_bact"/>
    <property type="match status" value="1"/>
</dbReference>
<dbReference type="NCBIfam" id="NF004863">
    <property type="entry name" value="PRK06223.1"/>
    <property type="match status" value="1"/>
</dbReference>
<dbReference type="PANTHER" id="PTHR43128">
    <property type="entry name" value="L-2-HYDROXYCARBOXYLATE DEHYDROGENASE (NAD(P)(+))"/>
    <property type="match status" value="1"/>
</dbReference>
<dbReference type="PANTHER" id="PTHR43128:SF16">
    <property type="entry name" value="L-LACTATE DEHYDROGENASE"/>
    <property type="match status" value="1"/>
</dbReference>
<dbReference type="Pfam" id="PF02866">
    <property type="entry name" value="Ldh_1_C"/>
    <property type="match status" value="1"/>
</dbReference>
<dbReference type="Pfam" id="PF00056">
    <property type="entry name" value="Ldh_1_N"/>
    <property type="match status" value="1"/>
</dbReference>
<dbReference type="PIRSF" id="PIRSF000102">
    <property type="entry name" value="Lac_mal_DH"/>
    <property type="match status" value="1"/>
</dbReference>
<dbReference type="PRINTS" id="PR00086">
    <property type="entry name" value="LLDHDRGNASE"/>
</dbReference>
<dbReference type="SUPFAM" id="SSF56327">
    <property type="entry name" value="LDH C-terminal domain-like"/>
    <property type="match status" value="1"/>
</dbReference>
<dbReference type="SUPFAM" id="SSF51735">
    <property type="entry name" value="NAD(P)-binding Rossmann-fold domains"/>
    <property type="match status" value="1"/>
</dbReference>
<comment type="function">
    <text evidence="1">Catalyzes the reversible oxidation of malate to oxaloacetate.</text>
</comment>
<comment type="catalytic activity">
    <reaction evidence="1">
        <text>(S)-malate + NAD(+) = oxaloacetate + NADH + H(+)</text>
        <dbReference type="Rhea" id="RHEA:21432"/>
        <dbReference type="ChEBI" id="CHEBI:15378"/>
        <dbReference type="ChEBI" id="CHEBI:15589"/>
        <dbReference type="ChEBI" id="CHEBI:16452"/>
        <dbReference type="ChEBI" id="CHEBI:57540"/>
        <dbReference type="ChEBI" id="CHEBI:57945"/>
        <dbReference type="EC" id="1.1.1.37"/>
    </reaction>
</comment>
<comment type="similarity">
    <text evidence="1">Belongs to the LDH/MDH superfamily. MDH type 3 family.</text>
</comment>
<organism>
    <name type="scientific">Bradyrhizobium diazoefficiens (strain JCM 10833 / BCRC 13528 / IAM 13628 / NBRC 14792 / USDA 110)</name>
    <dbReference type="NCBI Taxonomy" id="224911"/>
    <lineage>
        <taxon>Bacteria</taxon>
        <taxon>Pseudomonadati</taxon>
        <taxon>Pseudomonadota</taxon>
        <taxon>Alphaproteobacteria</taxon>
        <taxon>Hyphomicrobiales</taxon>
        <taxon>Nitrobacteraceae</taxon>
        <taxon>Bradyrhizobium</taxon>
    </lineage>
</organism>